<keyword id="KW-0002">3D-structure</keyword>
<keyword id="KW-0067">ATP-binding</keyword>
<keyword id="KW-0131">Cell cycle</keyword>
<keyword id="KW-0132">Cell division</keyword>
<keyword id="KW-0997">Cell inner membrane</keyword>
<keyword id="KW-1003">Cell membrane</keyword>
<keyword id="KW-0472">Membrane</keyword>
<keyword id="KW-0547">Nucleotide-binding</keyword>
<keyword id="KW-1185">Reference proteome</keyword>
<sequence length="222" mass="24439">MIRFEHVSKAYLGGRQALQGVTFHMQPGEMAFLTGHSGAGKSTLLKLICGIERPSAGKIWFSGHDITRLKNREVPFLRRQIGMIFQDHHLLMDRTVYDNVAIPLIIAGASGDDIRRRVSAALDKVGLLDKAKNFPIQLSGGEQQRVGIARAVVNKPAVLLADEPTGNLDDALSEGILRLFEEFNRVGVTVLMATHDINLISRRSYRMLTLSDGHLHGGVGHE</sequence>
<feature type="chain" id="PRO_0000092328" description="Cell division ATP-binding protein FtsE">
    <location>
        <begin position="1"/>
        <end position="222"/>
    </location>
</feature>
<feature type="domain" description="ABC transporter" evidence="1">
    <location>
        <begin position="2"/>
        <end position="222"/>
    </location>
</feature>
<feature type="binding site" evidence="7">
    <location>
        <begin position="35"/>
        <end position="42"/>
    </location>
    <ligand>
        <name>ATP</name>
        <dbReference type="ChEBI" id="CHEBI:30616"/>
    </ligand>
</feature>
<feature type="mutagenesis site" description="Does not bind ATP." evidence="2">
    <original>K</original>
    <variation>R</variation>
    <location>
        <position position="41"/>
    </location>
</feature>
<feature type="mutagenesis site" description="Prevents dimer formation. Does not alter ATP-binding." evidence="2">
    <original>C</original>
    <variation>A</variation>
    <location>
        <position position="49"/>
    </location>
</feature>
<feature type="strand" evidence="8">
    <location>
        <begin position="2"/>
        <end position="10"/>
    </location>
</feature>
<feature type="turn" evidence="9">
    <location>
        <begin position="12"/>
        <end position="14"/>
    </location>
</feature>
<feature type="strand" evidence="8">
    <location>
        <begin position="16"/>
        <end position="25"/>
    </location>
</feature>
<feature type="strand" evidence="8">
    <location>
        <begin position="30"/>
        <end position="35"/>
    </location>
</feature>
<feature type="helix" evidence="8">
    <location>
        <begin position="41"/>
        <end position="49"/>
    </location>
</feature>
<feature type="strand" evidence="8">
    <location>
        <begin position="55"/>
        <end position="61"/>
    </location>
</feature>
<feature type="turn" evidence="8">
    <location>
        <begin position="71"/>
        <end position="73"/>
    </location>
</feature>
<feature type="helix" evidence="8">
    <location>
        <begin position="74"/>
        <end position="79"/>
    </location>
</feature>
<feature type="strand" evidence="8">
    <location>
        <begin position="80"/>
        <end position="84"/>
    </location>
</feature>
<feature type="helix" evidence="8">
    <location>
        <begin position="96"/>
        <end position="107"/>
    </location>
</feature>
<feature type="helix" evidence="8">
    <location>
        <begin position="111"/>
        <end position="124"/>
    </location>
</feature>
<feature type="helix" evidence="9">
    <location>
        <begin position="128"/>
        <end position="130"/>
    </location>
</feature>
<feature type="strand" evidence="8">
    <location>
        <begin position="131"/>
        <end position="133"/>
    </location>
</feature>
<feature type="helix" evidence="8">
    <location>
        <begin position="135"/>
        <end position="137"/>
    </location>
</feature>
<feature type="helix" evidence="8">
    <location>
        <begin position="140"/>
        <end position="151"/>
    </location>
</feature>
<feature type="helix" evidence="9">
    <location>
        <begin position="152"/>
        <end position="154"/>
    </location>
</feature>
<feature type="strand" evidence="8">
    <location>
        <begin position="157"/>
        <end position="163"/>
    </location>
</feature>
<feature type="turn" evidence="8">
    <location>
        <begin position="164"/>
        <end position="167"/>
    </location>
</feature>
<feature type="helix" evidence="8">
    <location>
        <begin position="170"/>
        <end position="184"/>
    </location>
</feature>
<feature type="turn" evidence="8">
    <location>
        <begin position="185"/>
        <end position="187"/>
    </location>
</feature>
<feature type="strand" evidence="8">
    <location>
        <begin position="189"/>
        <end position="193"/>
    </location>
</feature>
<feature type="helix" evidence="8">
    <location>
        <begin position="197"/>
        <end position="200"/>
    </location>
</feature>
<feature type="strand" evidence="9">
    <location>
        <begin position="201"/>
        <end position="203"/>
    </location>
</feature>
<feature type="strand" evidence="8">
    <location>
        <begin position="206"/>
        <end position="211"/>
    </location>
</feature>
<feature type="strand" evidence="8">
    <location>
        <begin position="214"/>
        <end position="216"/>
    </location>
</feature>
<accession>P0A9R7</accession>
<accession>P10115</accession>
<accession>Q2M7C6</accession>
<proteinExistence type="evidence at protein level"/>
<gene>
    <name type="primary">ftsE</name>
    <name type="ordered locus">b3463</name>
    <name type="ordered locus">JW3428</name>
</gene>
<name>FTSE_ECOLI</name>
<evidence type="ECO:0000255" key="1">
    <source>
        <dbReference type="PROSITE-ProRule" id="PRU00434"/>
    </source>
</evidence>
<evidence type="ECO:0000269" key="2">
    <source>
    </source>
</evidence>
<evidence type="ECO:0000269" key="3">
    <source>
    </source>
</evidence>
<evidence type="ECO:0000269" key="4">
    <source>
    </source>
</evidence>
<evidence type="ECO:0000269" key="5">
    <source>
    </source>
</evidence>
<evidence type="ECO:0000305" key="6"/>
<evidence type="ECO:0000305" key="7">
    <source>
    </source>
</evidence>
<evidence type="ECO:0007829" key="8">
    <source>
        <dbReference type="PDB" id="8X61"/>
    </source>
</evidence>
<evidence type="ECO:0007829" key="9">
    <source>
        <dbReference type="PDB" id="8Y3X"/>
    </source>
</evidence>
<organism>
    <name type="scientific">Escherichia coli (strain K12)</name>
    <dbReference type="NCBI Taxonomy" id="83333"/>
    <lineage>
        <taxon>Bacteria</taxon>
        <taxon>Pseudomonadati</taxon>
        <taxon>Pseudomonadota</taxon>
        <taxon>Gammaproteobacteria</taxon>
        <taxon>Enterobacterales</taxon>
        <taxon>Enterobacteriaceae</taxon>
        <taxon>Escherichia</taxon>
    </lineage>
</organism>
<comment type="function">
    <text evidence="3">Part of the ABC transporter FtsEX involved in cellular division. Important for assembly or stability of the septal ring.</text>
</comment>
<comment type="subunit">
    <text evidence="2 4">Homodimer (PubMed:10048040). Forms a membrane-associated complex with FtsX (PubMed:10048040). Interacts with FtsZ, independently of FtsX, FtsA or ZipA (PubMed:17307852).</text>
</comment>
<comment type="interaction">
    <interactant intactId="EBI-550637">
        <id>P0A9R7</id>
    </interactant>
    <interactant intactId="EBI-370963">
        <id>P0A9A6</id>
        <label>ftsZ</label>
    </interactant>
    <organismsDiffer>false</organismsDiffer>
    <experiments>2</experiments>
</comment>
<comment type="subcellular location">
    <subcellularLocation>
        <location evidence="2 5">Cell inner membrane</location>
        <topology evidence="2">Peripheral membrane protein</topology>
        <orientation evidence="6">Cytoplasmic side</orientation>
    </subcellularLocation>
    <text evidence="2 3">Associated with the membrane through an interaction with FtsX (PubMed:10048040). Localizes to the septal ring at the later stages of cell growth and remains there until division is complete (PubMed:14729705). This localization is dependent on localization of FtsZ, FtsA and ZipA, but not on the downstream division proteins FtsK, FtsQ or FtsI (PubMed:14729705).</text>
</comment>
<comment type="disruption phenotype">
    <text evidence="2">Inactivation results in a filamented cellular morphology, but not in a temperature-sensitive phenotype.</text>
</comment>
<comment type="similarity">
    <text evidence="6">Belongs to the ABC transporter superfamily.</text>
</comment>
<protein>
    <recommendedName>
        <fullName evidence="6">Cell division ATP-binding protein FtsE</fullName>
    </recommendedName>
</protein>
<dbReference type="EMBL" id="X04398">
    <property type="protein sequence ID" value="CAA27985.1"/>
    <property type="molecule type" value="Genomic_DNA"/>
</dbReference>
<dbReference type="EMBL" id="U00039">
    <property type="protein sequence ID" value="AAB18438.1"/>
    <property type="molecule type" value="Genomic_DNA"/>
</dbReference>
<dbReference type="EMBL" id="U00096">
    <property type="protein sequence ID" value="AAC76488.1"/>
    <property type="molecule type" value="Genomic_DNA"/>
</dbReference>
<dbReference type="EMBL" id="AP009048">
    <property type="protein sequence ID" value="BAE77830.1"/>
    <property type="molecule type" value="Genomic_DNA"/>
</dbReference>
<dbReference type="PIR" id="S03131">
    <property type="entry name" value="CEECFE"/>
</dbReference>
<dbReference type="RefSeq" id="NP_417920.1">
    <property type="nucleotide sequence ID" value="NC_000913.3"/>
</dbReference>
<dbReference type="RefSeq" id="WP_000617723.1">
    <property type="nucleotide sequence ID" value="NZ_STEB01000004.1"/>
</dbReference>
<dbReference type="PDB" id="8HD0">
    <property type="method" value="EM"/>
    <property type="resolution" value="3.11 A"/>
    <property type="chains" value="A/B=1-222"/>
</dbReference>
<dbReference type="PDB" id="8W6I">
    <property type="method" value="EM"/>
    <property type="resolution" value="3.70 A"/>
    <property type="chains" value="B/D=1-222"/>
</dbReference>
<dbReference type="PDB" id="8W6J">
    <property type="method" value="EM"/>
    <property type="resolution" value="3.40 A"/>
    <property type="chains" value="B/D=1-222"/>
</dbReference>
<dbReference type="PDB" id="8X61">
    <property type="method" value="EM"/>
    <property type="resolution" value="3.05 A"/>
    <property type="chains" value="A/B=1-222"/>
</dbReference>
<dbReference type="PDB" id="8Y3X">
    <property type="method" value="EM"/>
    <property type="resolution" value="3.11 A"/>
    <property type="chains" value="A/B=1-222"/>
</dbReference>
<dbReference type="PDB" id="8YMC">
    <property type="method" value="EM"/>
    <property type="resolution" value="2.70 A"/>
    <property type="chains" value="A/B=2-222"/>
</dbReference>
<dbReference type="PDBsum" id="8HD0"/>
<dbReference type="PDBsum" id="8W6I"/>
<dbReference type="PDBsum" id="8W6J"/>
<dbReference type="PDBsum" id="8X61"/>
<dbReference type="PDBsum" id="8Y3X"/>
<dbReference type="PDBsum" id="8YMC"/>
<dbReference type="EMDB" id="EMD-34668"/>
<dbReference type="EMDB" id="EMD-37324"/>
<dbReference type="EMDB" id="EMD-37325"/>
<dbReference type="EMDB" id="EMD-38077"/>
<dbReference type="EMDB" id="EMD-38906"/>
<dbReference type="EMDB" id="EMD-39394"/>
<dbReference type="SMR" id="P0A9R7"/>
<dbReference type="BioGRID" id="4260774">
    <property type="interactions" value="397"/>
</dbReference>
<dbReference type="ComplexPortal" id="CPX-4602">
    <property type="entry name" value="FtsEX ABC cell division complex"/>
</dbReference>
<dbReference type="DIP" id="DIP-47843N"/>
<dbReference type="FunCoup" id="P0A9R7">
    <property type="interactions" value="316"/>
</dbReference>
<dbReference type="IntAct" id="P0A9R7">
    <property type="interactions" value="29"/>
</dbReference>
<dbReference type="STRING" id="511145.b3463"/>
<dbReference type="TCDB" id="3.A.1.140.1">
    <property type="family name" value="the atp-binding cassette (abc) superfamily"/>
</dbReference>
<dbReference type="jPOST" id="P0A9R7"/>
<dbReference type="PaxDb" id="511145-b3463"/>
<dbReference type="EnsemblBacteria" id="AAC76488">
    <property type="protein sequence ID" value="AAC76488"/>
    <property type="gene ID" value="b3463"/>
</dbReference>
<dbReference type="GeneID" id="86862141"/>
<dbReference type="GeneID" id="947968"/>
<dbReference type="KEGG" id="ecj:JW3428"/>
<dbReference type="KEGG" id="eco:b3463"/>
<dbReference type="KEGG" id="ecoc:C3026_18760"/>
<dbReference type="PATRIC" id="fig|1411691.4.peg.3262"/>
<dbReference type="EchoBASE" id="EB0336"/>
<dbReference type="eggNOG" id="COG2884">
    <property type="taxonomic scope" value="Bacteria"/>
</dbReference>
<dbReference type="HOGENOM" id="CLU_000604_1_22_6"/>
<dbReference type="InParanoid" id="P0A9R7"/>
<dbReference type="OMA" id="MFNGHDI"/>
<dbReference type="OrthoDB" id="9802264at2"/>
<dbReference type="PhylomeDB" id="P0A9R7"/>
<dbReference type="BioCyc" id="EcoCyc:FTSE-MONOMER"/>
<dbReference type="PRO" id="PR:P0A9R7"/>
<dbReference type="Proteomes" id="UP000000625">
    <property type="component" value="Chromosome"/>
</dbReference>
<dbReference type="GO" id="GO:1904949">
    <property type="term" value="C:ATPase complex"/>
    <property type="evidence" value="ECO:0000353"/>
    <property type="project" value="ComplexPortal"/>
</dbReference>
<dbReference type="GO" id="GO:0032153">
    <property type="term" value="C:cell division site"/>
    <property type="evidence" value="ECO:0000314"/>
    <property type="project" value="EcoliWiki"/>
</dbReference>
<dbReference type="GO" id="GO:0005737">
    <property type="term" value="C:cytoplasm"/>
    <property type="evidence" value="ECO:0000314"/>
    <property type="project" value="EcoliWiki"/>
</dbReference>
<dbReference type="GO" id="GO:0000935">
    <property type="term" value="C:division septum"/>
    <property type="evidence" value="ECO:0000314"/>
    <property type="project" value="ComplexPortal"/>
</dbReference>
<dbReference type="GO" id="GO:1990586">
    <property type="term" value="C:divisome complex"/>
    <property type="evidence" value="ECO:0000303"/>
    <property type="project" value="ComplexPortal"/>
</dbReference>
<dbReference type="GO" id="GO:0019898">
    <property type="term" value="C:extrinsic component of membrane"/>
    <property type="evidence" value="ECO:0000314"/>
    <property type="project" value="EcoliWiki"/>
</dbReference>
<dbReference type="GO" id="GO:0005886">
    <property type="term" value="C:plasma membrane"/>
    <property type="evidence" value="ECO:0000314"/>
    <property type="project" value="ComplexPortal"/>
</dbReference>
<dbReference type="GO" id="GO:0098797">
    <property type="term" value="C:plasma membrane protein complex"/>
    <property type="evidence" value="ECO:0000353"/>
    <property type="project" value="ComplexPortal"/>
</dbReference>
<dbReference type="GO" id="GO:0005524">
    <property type="term" value="F:ATP binding"/>
    <property type="evidence" value="ECO:0000314"/>
    <property type="project" value="EcoliWiki"/>
</dbReference>
<dbReference type="GO" id="GO:0016887">
    <property type="term" value="F:ATP hydrolysis activity"/>
    <property type="evidence" value="ECO:0007669"/>
    <property type="project" value="InterPro"/>
</dbReference>
<dbReference type="GO" id="GO:0022857">
    <property type="term" value="F:transmembrane transporter activity"/>
    <property type="evidence" value="ECO:0000318"/>
    <property type="project" value="GO_Central"/>
</dbReference>
<dbReference type="GO" id="GO:0051301">
    <property type="term" value="P:cell division"/>
    <property type="evidence" value="ECO:0000315"/>
    <property type="project" value="EcoliWiki"/>
</dbReference>
<dbReference type="GO" id="GO:0000917">
    <property type="term" value="P:division septum assembly"/>
    <property type="evidence" value="ECO:0000303"/>
    <property type="project" value="ComplexPortal"/>
</dbReference>
<dbReference type="GO" id="GO:0043093">
    <property type="term" value="P:FtsZ-dependent cytokinesis"/>
    <property type="evidence" value="ECO:0000303"/>
    <property type="project" value="ComplexPortal"/>
</dbReference>
<dbReference type="GO" id="GO:0009254">
    <property type="term" value="P:peptidoglycan turnover"/>
    <property type="evidence" value="ECO:0000303"/>
    <property type="project" value="ComplexPortal"/>
</dbReference>
<dbReference type="GO" id="GO:0051781">
    <property type="term" value="P:positive regulation of cell division"/>
    <property type="evidence" value="ECO:0000314"/>
    <property type="project" value="ComplexPortal"/>
</dbReference>
<dbReference type="GO" id="GO:0046677">
    <property type="term" value="P:response to antibiotic"/>
    <property type="evidence" value="ECO:0000315"/>
    <property type="project" value="EcoliWiki"/>
</dbReference>
<dbReference type="GO" id="GO:0055085">
    <property type="term" value="P:transmembrane transport"/>
    <property type="evidence" value="ECO:0000318"/>
    <property type="project" value="GO_Central"/>
</dbReference>
<dbReference type="FunFam" id="3.40.50.300:FF:000056">
    <property type="entry name" value="Cell division ATP-binding protein FtsE"/>
    <property type="match status" value="1"/>
</dbReference>
<dbReference type="Gene3D" id="3.40.50.300">
    <property type="entry name" value="P-loop containing nucleotide triphosphate hydrolases"/>
    <property type="match status" value="1"/>
</dbReference>
<dbReference type="InterPro" id="IPR003593">
    <property type="entry name" value="AAA+_ATPase"/>
</dbReference>
<dbReference type="InterPro" id="IPR003439">
    <property type="entry name" value="ABC_transporter-like_ATP-bd"/>
</dbReference>
<dbReference type="InterPro" id="IPR017871">
    <property type="entry name" value="ABC_transporter-like_CS"/>
</dbReference>
<dbReference type="InterPro" id="IPR015854">
    <property type="entry name" value="ABC_transpr_LolD-like"/>
</dbReference>
<dbReference type="InterPro" id="IPR005286">
    <property type="entry name" value="Cell_div_FtsE"/>
</dbReference>
<dbReference type="InterPro" id="IPR027417">
    <property type="entry name" value="P-loop_NTPase"/>
</dbReference>
<dbReference type="NCBIfam" id="TIGR02673">
    <property type="entry name" value="FtsE"/>
    <property type="match status" value="1"/>
</dbReference>
<dbReference type="PANTHER" id="PTHR24220:SF470">
    <property type="entry name" value="CELL DIVISION ATP-BINDING PROTEIN FTSE"/>
    <property type="match status" value="1"/>
</dbReference>
<dbReference type="PANTHER" id="PTHR24220">
    <property type="entry name" value="IMPORT ATP-BINDING PROTEIN"/>
    <property type="match status" value="1"/>
</dbReference>
<dbReference type="Pfam" id="PF00005">
    <property type="entry name" value="ABC_tran"/>
    <property type="match status" value="1"/>
</dbReference>
<dbReference type="SMART" id="SM00382">
    <property type="entry name" value="AAA"/>
    <property type="match status" value="1"/>
</dbReference>
<dbReference type="SUPFAM" id="SSF52540">
    <property type="entry name" value="P-loop containing nucleoside triphosphate hydrolases"/>
    <property type="match status" value="1"/>
</dbReference>
<dbReference type="PROSITE" id="PS00211">
    <property type="entry name" value="ABC_TRANSPORTER_1"/>
    <property type="match status" value="1"/>
</dbReference>
<dbReference type="PROSITE" id="PS50893">
    <property type="entry name" value="ABC_TRANSPORTER_2"/>
    <property type="match status" value="1"/>
</dbReference>
<reference key="1">
    <citation type="journal article" date="1986" name="Mol. Gen. Genet.">
        <title>A new cell division operon in Escherichia coli.</title>
        <authorList>
            <person name="Gill D.R."/>
            <person name="Hatfull G.F."/>
            <person name="Salmond G.P.C."/>
        </authorList>
    </citation>
    <scope>NUCLEOTIDE SEQUENCE [GENOMIC DNA]</scope>
    <source>
        <strain>K12</strain>
    </source>
</reference>
<reference key="2">
    <citation type="journal article" date="1994" name="Nucleic Acids Res.">
        <title>Analysis of the Escherichia coli genome. V. DNA sequence of the region from 76.0 to 81.5 minutes.</title>
        <authorList>
            <person name="Sofia H.J."/>
            <person name="Burland V."/>
            <person name="Daniels D.L."/>
            <person name="Plunkett G. III"/>
            <person name="Blattner F.R."/>
        </authorList>
    </citation>
    <scope>NUCLEOTIDE SEQUENCE [LARGE SCALE GENOMIC DNA]</scope>
    <source>
        <strain>K12 / MG1655 / ATCC 47076</strain>
    </source>
</reference>
<reference key="3">
    <citation type="journal article" date="1997" name="Science">
        <title>The complete genome sequence of Escherichia coli K-12.</title>
        <authorList>
            <person name="Blattner F.R."/>
            <person name="Plunkett G. III"/>
            <person name="Bloch C.A."/>
            <person name="Perna N.T."/>
            <person name="Burland V."/>
            <person name="Riley M."/>
            <person name="Collado-Vides J."/>
            <person name="Glasner J.D."/>
            <person name="Rode C.K."/>
            <person name="Mayhew G.F."/>
            <person name="Gregor J."/>
            <person name="Davis N.W."/>
            <person name="Kirkpatrick H.A."/>
            <person name="Goeden M.A."/>
            <person name="Rose D.J."/>
            <person name="Mau B."/>
            <person name="Shao Y."/>
        </authorList>
    </citation>
    <scope>NUCLEOTIDE SEQUENCE [LARGE SCALE GENOMIC DNA]</scope>
    <source>
        <strain>K12 / MG1655 / ATCC 47076</strain>
    </source>
</reference>
<reference key="4">
    <citation type="journal article" date="2006" name="Mol. Syst. Biol.">
        <title>Highly accurate genome sequences of Escherichia coli K-12 strains MG1655 and W3110.</title>
        <authorList>
            <person name="Hayashi K."/>
            <person name="Morooka N."/>
            <person name="Yamamoto Y."/>
            <person name="Fujita K."/>
            <person name="Isono K."/>
            <person name="Choi S."/>
            <person name="Ohtsubo E."/>
            <person name="Baba T."/>
            <person name="Wanner B.L."/>
            <person name="Mori H."/>
            <person name="Horiuchi T."/>
        </authorList>
    </citation>
    <scope>NUCLEOTIDE SEQUENCE [LARGE SCALE GENOMIC DNA]</scope>
    <source>
        <strain>K12 / W3110 / ATCC 27325 / DSM 5911</strain>
    </source>
</reference>
<reference key="5">
    <citation type="journal article" date="1987" name="Mol. Gen. Genet.">
        <title>The Escherichia coli cell division proteins FtsY, FtsE and FtsX are inner membrane-associated.</title>
        <authorList>
            <person name="Gill D.R."/>
            <person name="Salmond G.P."/>
        </authorList>
    </citation>
    <scope>SUBCELLULAR LOCATION</scope>
</reference>
<reference key="6">
    <citation type="journal article" date="1999" name="Mol. Microbiol.">
        <title>Molecular characterization of Escherichia coli FtsE and FtsX.</title>
        <authorList>
            <person name="de Leeuw E."/>
            <person name="Graham B."/>
            <person name="Phillips G.J."/>
            <person name="ten Hagen-Jongman C.M."/>
            <person name="Oudega B."/>
            <person name="Luirink J."/>
        </authorList>
    </citation>
    <scope>SUBUNIT</scope>
    <scope>INTERACTION WITH FTSX</scope>
    <scope>SUBCELLULAR LOCATION</scope>
    <scope>DISRUPTION PHENOTYPE</scope>
    <scope>ATP-BINDING</scope>
    <scope>MUTAGENESIS OF LYS-41 AND CYS-49</scope>
</reference>
<reference key="7">
    <citation type="journal article" date="2004" name="J. Bacteriol.">
        <title>A predicted ABC transporter, FtsEX, is needed for cell division in Escherichia coli.</title>
        <authorList>
            <person name="Schmidt K.L."/>
            <person name="Peterson N.D."/>
            <person name="Kustusch R.J."/>
            <person name="Wissel M.C."/>
            <person name="Graham B."/>
            <person name="Phillips G.J."/>
            <person name="Weiss D.S."/>
        </authorList>
    </citation>
    <scope>FUNCTION</scope>
    <scope>SUBCELLULAR LOCATION</scope>
    <source>
        <strain>K12 / MG1655 / ATCC 47076</strain>
    </source>
</reference>
<reference key="8">
    <citation type="journal article" date="2007" name="J. Bacteriol.">
        <title>Interaction between cell division proteins FtsE and FtsZ.</title>
        <authorList>
            <person name="Corbin B.D."/>
            <person name="Wang Y."/>
            <person name="Beuria T.K."/>
            <person name="Margolin W."/>
        </authorList>
    </citation>
    <scope>INTERACTION WITH FTSZ</scope>
</reference>